<name>SIMR1_CAEEL</name>
<keyword id="KW-0963">Cytoplasm</keyword>
<keyword id="KW-1185">Reference proteome</keyword>
<keyword id="KW-0943">RNA-mediated gene silencing</keyword>
<sequence>MSNEKQQWDDAYCLAEEMHDAGRPFKREELNIADQFICSRFSTIFEYDPYKDTYGFRNQELTHAIPVKSKCRHISDVDILELKKNTANADIRFPSYLNICPVYAMHPFTVLAFDLSKPVPMGMNASMENAAPNMKSPTEAEITPGTIYIFKHRDNKCYRCVILFEDGDNNVSDADRKYMVAFLDTPQVVSVKLKTLFHLGKFTIESYPCALYCCRAVGILEIRKDFGADLNGQINEFYKDKVKRKSGVHALIYKKDDRGDKLIFDCPSILGTSMTMALEIKDVIGHRSVAENDPTALSYDELVSKQLPTVDIDDHNSSVVLDLEESVIAQELGSTNGADCPCNNDNIDDFMQSQRQNPLDNNRDNWDRINESRSSMQSFAINQSQAITANPTPQPTFDESSGEVQTIPESINNLALNGRYLEDGRGTEEIREERSVESRQIGNQVVSQASCNYLEARQNSTQTANAESVCAIISESHAALPTDIQVIPSQHVLNENNHTVLPSVAPIIRNATGHSHIFGRQIPSPAFRRESLSSGNSIQVATFAATTGPCGSNTSRPTAQNTANSSINQDMSISNSSTNARLITIAQDNLNDTENWPNSEREQSATEMESGAEATTNSAVDEFAQVSDDMKGLADSMINFLRLTANSNNQDAFKANIFAMELISTKIPNQLTKRFFTLKIAEAKSLAEGFN</sequence>
<gene>
    <name evidence="3 7" type="primary">simr-1</name>
    <name evidence="7" type="ORF">C06A5.6</name>
</gene>
<comment type="function">
    <text evidence="2">Acts downstream of piRNA production to promote mediator complex-dependent endogenous siRNA biogenesis from piRNA-target mRNAs in the RNA interference pathway in germ cells (PubMed:32338603). Not required to identify target mRNA by the piRNA pathway (PubMed:32338603). Plays a role in both spermatogenesis and oogenesis and in maintaining fertility over multiple generations, probably by directing mutator-dependent silencing to piRNA-targeted genes (PubMed:32338603).</text>
</comment>
<comment type="subcellular location">
    <subcellularLocation>
        <location evidence="2">Cytoplasm</location>
        <location evidence="2">Perinuclear region</location>
    </subcellularLocation>
    <text evidence="2">Localizes to perinuclear foci in germ cells, called SIMR foci, which are distinct from Mutator foci, P granules and Z granules (PubMed:32338603). SIMR foci are stacked, with znfx-1 localizing between simr-1 and pgl-1 (PubMed:32338603). Its localization at SIMR foci is adjacent to the mutator complex protein mut-16 (PubMed:32338603). Perinuclear localization is not dependent on mut-16 (PubMed:32338603).</text>
</comment>
<comment type="domain">
    <text evidence="3">Tudor domain specifically binds peptides with symmetrically dimethylated arginines (sDMA) and may facilitate protein-protein interactions (PubMed:32338603). The Tudor domain contains the conserved arginine and aspartic acid residues, which play a structural role, but lacks two of the four conserved aromatic residues, so it is unclear whether it is functional to recognize a methylated substrate (PubMed:32338603).</text>
</comment>
<reference evidence="6" key="1">
    <citation type="journal article" date="1998" name="Science">
        <title>Genome sequence of the nematode C. elegans: a platform for investigating biology.</title>
        <authorList>
            <consortium name="The C. elegans sequencing consortium"/>
        </authorList>
    </citation>
    <scope>NUCLEOTIDE SEQUENCE [LARGE SCALE GENOMIC DNA]</scope>
    <source>
        <strain evidence="6">Bristol N2</strain>
    </source>
</reference>
<reference evidence="4" key="2">
    <citation type="journal article" date="2020" name="Elife">
        <title>A Tudor domain protein, SIMR-1, promotes siRNA production at piRNA-targeted mRNAs in C. elegans.</title>
        <authorList>
            <person name="Manage K.I."/>
            <person name="Rogers A.K."/>
            <person name="Wallis D.C."/>
            <person name="Uebel C.J."/>
            <person name="Anderson D.C."/>
            <person name="Nguyen D.A.H."/>
            <person name="Arca K."/>
            <person name="Brown K.C."/>
            <person name="Cordeiro Rodrigues R.J."/>
            <person name="de Albuquerque B.F.M."/>
            <person name="Ketting R.F."/>
            <person name="Montgomery T.A."/>
            <person name="Phillips C.M."/>
        </authorList>
    </citation>
    <scope>FUNCTION</scope>
    <scope>SUBCELLULAR LOCATION</scope>
    <scope>DOMAIN</scope>
    <scope>MUTAGENESIS OF ALA-11 AND ARG-159</scope>
</reference>
<evidence type="ECO:0000256" key="1">
    <source>
        <dbReference type="SAM" id="MobiDB-lite"/>
    </source>
</evidence>
<evidence type="ECO:0000269" key="2">
    <source>
    </source>
</evidence>
<evidence type="ECO:0000303" key="3">
    <source>
    </source>
</evidence>
<evidence type="ECO:0000305" key="4"/>
<evidence type="ECO:0000305" key="5">
    <source>
    </source>
</evidence>
<evidence type="ECO:0000312" key="6">
    <source>
        <dbReference type="Proteomes" id="UP000001940"/>
    </source>
</evidence>
<evidence type="ECO:0000312" key="7">
    <source>
        <dbReference type="WormBase" id="C06A5.6"/>
    </source>
</evidence>
<organism evidence="6">
    <name type="scientific">Caenorhabditis elegans</name>
    <dbReference type="NCBI Taxonomy" id="6239"/>
    <lineage>
        <taxon>Eukaryota</taxon>
        <taxon>Metazoa</taxon>
        <taxon>Ecdysozoa</taxon>
        <taxon>Nematoda</taxon>
        <taxon>Chromadorea</taxon>
        <taxon>Rhabditida</taxon>
        <taxon>Rhabditina</taxon>
        <taxon>Rhabditomorpha</taxon>
        <taxon>Rhabditoidea</taxon>
        <taxon>Rhabditidae</taxon>
        <taxon>Peloderinae</taxon>
        <taxon>Caenorhabditis</taxon>
    </lineage>
</organism>
<feature type="chain" id="PRO_0000450823" description="Protein simr-1">
    <location>
        <begin position="1"/>
        <end position="691"/>
    </location>
</feature>
<feature type="domain" description="Tudor; degenerate" evidence="5">
    <location>
        <begin position="139"/>
        <end position="204"/>
    </location>
</feature>
<feature type="region of interest" description="Disordered" evidence="1">
    <location>
        <begin position="547"/>
        <end position="573"/>
    </location>
</feature>
<feature type="region of interest" description="Disordered" evidence="1">
    <location>
        <begin position="588"/>
        <end position="618"/>
    </location>
</feature>
<feature type="compositionally biased region" description="Polar residues" evidence="1">
    <location>
        <begin position="549"/>
        <end position="573"/>
    </location>
</feature>
<feature type="compositionally biased region" description="Polar residues" evidence="1">
    <location>
        <begin position="588"/>
        <end position="598"/>
    </location>
</feature>
<feature type="mutagenesis site" description="Inhibits piRNA-mediated gene silencing." evidence="2">
    <original>A</original>
    <variation>V</variation>
    <location>
        <position position="11"/>
    </location>
</feature>
<feature type="mutagenesis site" description="Progressive fertility defects at 25 degrees Celsius, with animals becoming sterile after 10 to 11 generations. Expressed in the cytoplasm of germ cells, but does not form germline foci. Inhibits piRNA-mediated gene silencing." evidence="2">
    <original>R</original>
    <variation>C</variation>
    <location>
        <position position="159"/>
    </location>
</feature>
<dbReference type="EMBL" id="BX284601">
    <property type="protein sequence ID" value="CCD61216.1"/>
    <property type="molecule type" value="Genomic_DNA"/>
</dbReference>
<dbReference type="PIR" id="T25519">
    <property type="entry name" value="T25519"/>
</dbReference>
<dbReference type="RefSeq" id="NP_001367306.1">
    <property type="nucleotide sequence ID" value="NM_001380434.2"/>
</dbReference>
<dbReference type="RefSeq" id="NP_491730.1">
    <property type="nucleotide sequence ID" value="NM_059329.4"/>
</dbReference>
<dbReference type="FunCoup" id="O01477">
    <property type="interactions" value="178"/>
</dbReference>
<dbReference type="STRING" id="6239.C06A5.6.1"/>
<dbReference type="PaxDb" id="6239-C06A5.6"/>
<dbReference type="PeptideAtlas" id="O01477"/>
<dbReference type="EnsemblMetazoa" id="C06A5.6.1">
    <property type="protein sequence ID" value="C06A5.6.1"/>
    <property type="gene ID" value="WBGene00015504"/>
</dbReference>
<dbReference type="EnsemblMetazoa" id="C06A5.6.2">
    <property type="protein sequence ID" value="C06A5.6.2"/>
    <property type="gene ID" value="WBGene00015504"/>
</dbReference>
<dbReference type="EnsemblMetazoa" id="C06A5.6.3">
    <property type="protein sequence ID" value="C06A5.6.3"/>
    <property type="gene ID" value="WBGene00015504"/>
</dbReference>
<dbReference type="GeneID" id="172273"/>
<dbReference type="UCSC" id="C06A5.6">
    <property type="organism name" value="c. elegans"/>
</dbReference>
<dbReference type="AGR" id="WB:WBGene00015504"/>
<dbReference type="WormBase" id="C06A5.6">
    <property type="protein sequence ID" value="CE07953"/>
    <property type="gene ID" value="WBGene00015504"/>
    <property type="gene designation" value="simr-1"/>
</dbReference>
<dbReference type="eggNOG" id="ENOG502RT5V">
    <property type="taxonomic scope" value="Eukaryota"/>
</dbReference>
<dbReference type="GeneTree" id="ENSGT00970000196511"/>
<dbReference type="HOGENOM" id="CLU_358340_0_0_1"/>
<dbReference type="InParanoid" id="O01477"/>
<dbReference type="OrthoDB" id="5820883at2759"/>
<dbReference type="PRO" id="PR:O01477"/>
<dbReference type="Proteomes" id="UP000001940">
    <property type="component" value="Chromosome I"/>
</dbReference>
<dbReference type="Bgee" id="WBGene00015504">
    <property type="expression patterns" value="Expressed in germ line (C elegans) and 4 other cell types or tissues"/>
</dbReference>
<dbReference type="GO" id="GO:0048471">
    <property type="term" value="C:perinuclear region of cytoplasm"/>
    <property type="evidence" value="ECO:0000314"/>
    <property type="project" value="UniProtKB"/>
</dbReference>
<dbReference type="GO" id="GO:0090727">
    <property type="term" value="P:positive regulation of brood size"/>
    <property type="evidence" value="ECO:0000315"/>
    <property type="project" value="UniProtKB"/>
</dbReference>
<dbReference type="GO" id="GO:1905881">
    <property type="term" value="P:positive regulation of oogenesis"/>
    <property type="evidence" value="ECO:0000315"/>
    <property type="project" value="UniProtKB"/>
</dbReference>
<dbReference type="GO" id="GO:0030422">
    <property type="term" value="P:siRNA processing"/>
    <property type="evidence" value="ECO:0000315"/>
    <property type="project" value="UniProtKB"/>
</dbReference>
<dbReference type="GO" id="GO:0007283">
    <property type="term" value="P:spermatogenesis"/>
    <property type="evidence" value="ECO:0000315"/>
    <property type="project" value="UniProtKB"/>
</dbReference>
<dbReference type="Gene3D" id="2.30.30.140">
    <property type="match status" value="1"/>
</dbReference>
<protein>
    <recommendedName>
        <fullName evidence="4">Protein simr-1</fullName>
    </recommendedName>
    <alternativeName>
        <fullName evidence="3">siRNA-defective and mortal germline protein 1</fullName>
    </alternativeName>
</protein>
<proteinExistence type="evidence at protein level"/>
<accession>O01477</accession>